<accession>Q73YJ7</accession>
<protein>
    <recommendedName>
        <fullName evidence="1">Octanoyltransferase</fullName>
        <ecNumber evidence="1">2.3.1.181</ecNumber>
    </recommendedName>
    <alternativeName>
        <fullName evidence="1">Lipoate-protein ligase B</fullName>
    </alternativeName>
    <alternativeName>
        <fullName evidence="1">Lipoyl/octanoyl transferase</fullName>
    </alternativeName>
    <alternativeName>
        <fullName evidence="1">Octanoyl-[acyl-carrier-protein]-protein N-octanoyltransferase</fullName>
    </alternativeName>
</protein>
<dbReference type="EC" id="2.3.1.181" evidence="1"/>
<dbReference type="EMBL" id="AE016958">
    <property type="protein sequence ID" value="AAS04275.1"/>
    <property type="molecule type" value="Genomic_DNA"/>
</dbReference>
<dbReference type="RefSeq" id="WP_003878163.1">
    <property type="nucleotide sequence ID" value="NZ_CP106873.1"/>
</dbReference>
<dbReference type="SMR" id="Q73YJ7"/>
<dbReference type="STRING" id="262316.MAP_1958"/>
<dbReference type="KEGG" id="mpa:MAP_1958"/>
<dbReference type="PATRIC" id="fig|262316.17.peg.2078"/>
<dbReference type="eggNOG" id="COG0321">
    <property type="taxonomic scope" value="Bacteria"/>
</dbReference>
<dbReference type="HOGENOM" id="CLU_035168_2_1_11"/>
<dbReference type="UniPathway" id="UPA00538">
    <property type="reaction ID" value="UER00592"/>
</dbReference>
<dbReference type="Proteomes" id="UP000000580">
    <property type="component" value="Chromosome"/>
</dbReference>
<dbReference type="GO" id="GO:0005737">
    <property type="term" value="C:cytoplasm"/>
    <property type="evidence" value="ECO:0007669"/>
    <property type="project" value="UniProtKB-SubCell"/>
</dbReference>
<dbReference type="GO" id="GO:0033819">
    <property type="term" value="F:lipoyl(octanoyl) transferase activity"/>
    <property type="evidence" value="ECO:0007669"/>
    <property type="project" value="UniProtKB-EC"/>
</dbReference>
<dbReference type="GO" id="GO:0036211">
    <property type="term" value="P:protein modification process"/>
    <property type="evidence" value="ECO:0007669"/>
    <property type="project" value="InterPro"/>
</dbReference>
<dbReference type="CDD" id="cd16444">
    <property type="entry name" value="LipB"/>
    <property type="match status" value="1"/>
</dbReference>
<dbReference type="FunFam" id="3.30.930.10:FF:000035">
    <property type="entry name" value="Putative lipoyltransferase 2, mitochondrial"/>
    <property type="match status" value="1"/>
</dbReference>
<dbReference type="Gene3D" id="3.30.930.10">
    <property type="entry name" value="Bira Bifunctional Protein, Domain 2"/>
    <property type="match status" value="1"/>
</dbReference>
<dbReference type="HAMAP" id="MF_00013">
    <property type="entry name" value="LipB"/>
    <property type="match status" value="1"/>
</dbReference>
<dbReference type="InterPro" id="IPR045864">
    <property type="entry name" value="aa-tRNA-synth_II/BPL/LPL"/>
</dbReference>
<dbReference type="InterPro" id="IPR004143">
    <property type="entry name" value="BPL_LPL_catalytic"/>
</dbReference>
<dbReference type="InterPro" id="IPR000544">
    <property type="entry name" value="Octanoyltransferase"/>
</dbReference>
<dbReference type="InterPro" id="IPR020605">
    <property type="entry name" value="Octanoyltransferase_CS"/>
</dbReference>
<dbReference type="NCBIfam" id="TIGR00214">
    <property type="entry name" value="lipB"/>
    <property type="match status" value="1"/>
</dbReference>
<dbReference type="NCBIfam" id="NF010925">
    <property type="entry name" value="PRK14345.1"/>
    <property type="match status" value="1"/>
</dbReference>
<dbReference type="PANTHER" id="PTHR10993:SF7">
    <property type="entry name" value="LIPOYLTRANSFERASE 2, MITOCHONDRIAL-RELATED"/>
    <property type="match status" value="1"/>
</dbReference>
<dbReference type="PANTHER" id="PTHR10993">
    <property type="entry name" value="OCTANOYLTRANSFERASE"/>
    <property type="match status" value="1"/>
</dbReference>
<dbReference type="Pfam" id="PF21948">
    <property type="entry name" value="LplA-B_cat"/>
    <property type="match status" value="1"/>
</dbReference>
<dbReference type="PIRSF" id="PIRSF016262">
    <property type="entry name" value="LPLase"/>
    <property type="match status" value="1"/>
</dbReference>
<dbReference type="SUPFAM" id="SSF55681">
    <property type="entry name" value="Class II aaRS and biotin synthetases"/>
    <property type="match status" value="1"/>
</dbReference>
<dbReference type="PROSITE" id="PS51733">
    <property type="entry name" value="BPL_LPL_CATALYTIC"/>
    <property type="match status" value="1"/>
</dbReference>
<dbReference type="PROSITE" id="PS01313">
    <property type="entry name" value="LIPB"/>
    <property type="match status" value="1"/>
</dbReference>
<comment type="function">
    <text evidence="1">Catalyzes the transfer of endogenously produced octanoic acid from octanoyl-acyl-carrier-protein onto the lipoyl domains of lipoate-dependent enzymes. Lipoyl-ACP can also act as a substrate although octanoyl-ACP is likely to be the physiological substrate.</text>
</comment>
<comment type="catalytic activity">
    <reaction evidence="1">
        <text>octanoyl-[ACP] + L-lysyl-[protein] = N(6)-octanoyl-L-lysyl-[protein] + holo-[ACP] + H(+)</text>
        <dbReference type="Rhea" id="RHEA:17665"/>
        <dbReference type="Rhea" id="RHEA-COMP:9636"/>
        <dbReference type="Rhea" id="RHEA-COMP:9685"/>
        <dbReference type="Rhea" id="RHEA-COMP:9752"/>
        <dbReference type="Rhea" id="RHEA-COMP:9928"/>
        <dbReference type="ChEBI" id="CHEBI:15378"/>
        <dbReference type="ChEBI" id="CHEBI:29969"/>
        <dbReference type="ChEBI" id="CHEBI:64479"/>
        <dbReference type="ChEBI" id="CHEBI:78463"/>
        <dbReference type="ChEBI" id="CHEBI:78809"/>
        <dbReference type="EC" id="2.3.1.181"/>
    </reaction>
</comment>
<comment type="pathway">
    <text evidence="1">Protein modification; protein lipoylation via endogenous pathway; protein N(6)-(lipoyl)lysine from octanoyl-[acyl-carrier-protein]: step 1/2.</text>
</comment>
<comment type="subcellular location">
    <subcellularLocation>
        <location evidence="1">Cytoplasm</location>
    </subcellularLocation>
</comment>
<comment type="miscellaneous">
    <text evidence="1">In the reaction, the free carboxyl group of octanoic acid is attached via an amide linkage to the epsilon-amino group of a specific lysine residue of lipoyl domains of lipoate-dependent enzymes.</text>
</comment>
<comment type="similarity">
    <text evidence="1">Belongs to the LipB family.</text>
</comment>
<reference key="1">
    <citation type="journal article" date="2005" name="Proc. Natl. Acad. Sci. U.S.A.">
        <title>The complete genome sequence of Mycobacterium avium subspecies paratuberculosis.</title>
        <authorList>
            <person name="Li L."/>
            <person name="Bannantine J.P."/>
            <person name="Zhang Q."/>
            <person name="Amonsin A."/>
            <person name="May B.J."/>
            <person name="Alt D."/>
            <person name="Banerji N."/>
            <person name="Kanjilal S."/>
            <person name="Kapur V."/>
        </authorList>
    </citation>
    <scope>NUCLEOTIDE SEQUENCE [LARGE SCALE GENOMIC DNA]</scope>
    <source>
        <strain>ATCC BAA-968 / K-10</strain>
    </source>
</reference>
<proteinExistence type="inferred from homology"/>
<name>LIPB_MYCPA</name>
<feature type="chain" id="PRO_0000062850" description="Octanoyltransferase">
    <location>
        <begin position="1"/>
        <end position="233"/>
    </location>
</feature>
<feature type="domain" description="BPL/LPL catalytic" evidence="2">
    <location>
        <begin position="38"/>
        <end position="218"/>
    </location>
</feature>
<feature type="region of interest" description="Disordered" evidence="3">
    <location>
        <begin position="57"/>
        <end position="77"/>
    </location>
</feature>
<feature type="compositionally biased region" description="Basic and acidic residues" evidence="3">
    <location>
        <begin position="57"/>
        <end position="66"/>
    </location>
</feature>
<feature type="active site" description="Acyl-thioester intermediate" evidence="1">
    <location>
        <position position="179"/>
    </location>
</feature>
<feature type="binding site" evidence="1">
    <location>
        <begin position="76"/>
        <end position="83"/>
    </location>
    <ligand>
        <name>substrate</name>
    </ligand>
</feature>
<feature type="binding site" evidence="1">
    <location>
        <begin position="148"/>
        <end position="150"/>
    </location>
    <ligand>
        <name>substrate</name>
    </ligand>
</feature>
<feature type="binding site" evidence="1">
    <location>
        <begin position="161"/>
        <end position="163"/>
    </location>
    <ligand>
        <name>substrate</name>
    </ligand>
</feature>
<feature type="site" description="Lowers pKa of active site Cys" evidence="1">
    <location>
        <position position="145"/>
    </location>
</feature>
<gene>
    <name evidence="1" type="primary">lipB</name>
    <name type="ordered locus">MAP_1958</name>
</gene>
<keyword id="KW-0012">Acyltransferase</keyword>
<keyword id="KW-0963">Cytoplasm</keyword>
<keyword id="KW-1185">Reference proteome</keyword>
<keyword id="KW-0808">Transferase</keyword>
<evidence type="ECO:0000255" key="1">
    <source>
        <dbReference type="HAMAP-Rule" id="MF_00013"/>
    </source>
</evidence>
<evidence type="ECO:0000255" key="2">
    <source>
        <dbReference type="PROSITE-ProRule" id="PRU01067"/>
    </source>
</evidence>
<evidence type="ECO:0000256" key="3">
    <source>
        <dbReference type="SAM" id="MobiDB-lite"/>
    </source>
</evidence>
<sequence>MIDSIRSSRALIDVRRLGTVDYRAAWQQQRDLADARVAGGPDTLLLLQHPAVYTAGRRTEPHERPLDGTPVVDTDRGGKITWHGPGQLVGYPIIGLAEPLDVVDYVRRLEEALIKVCADLGLDTVRVPGRSGVWVPGDAGRPDRKVAAIGVRVSRATTLHGFALNCDCELGAFNAIVPCGISDAGVTSLTAELRRPVAVDDVVTSVADAVCDALDGVLPVREHSPGARVASAM</sequence>
<organism>
    <name type="scientific">Mycolicibacterium paratuberculosis (strain ATCC BAA-968 / K-10)</name>
    <name type="common">Mycobacterium paratuberculosis</name>
    <dbReference type="NCBI Taxonomy" id="262316"/>
    <lineage>
        <taxon>Bacteria</taxon>
        <taxon>Bacillati</taxon>
        <taxon>Actinomycetota</taxon>
        <taxon>Actinomycetes</taxon>
        <taxon>Mycobacteriales</taxon>
        <taxon>Mycobacteriaceae</taxon>
        <taxon>Mycobacterium</taxon>
        <taxon>Mycobacterium avium complex (MAC)</taxon>
    </lineage>
</organism>